<name>QPT2A_TOBAC</name>
<protein>
    <recommendedName>
        <fullName evidence="7">Quinolinate phosphoribosyltransferase [decarboxylating] 2a, mitochondrial</fullName>
        <shortName evidence="7">NtQPT2a</shortName>
        <shortName evidence="6">QPRtase 2a</shortName>
        <ecNumber evidence="9 10 11">2.4.2.19</ecNumber>
    </recommendedName>
</protein>
<gene>
    <name evidence="7" type="primary">QPT2a</name>
    <name type="ORF">LOC107829122</name>
</gene>
<dbReference type="EC" id="2.4.2.19" evidence="9 10 11"/>
<dbReference type="EMBL" id="AJ243437">
    <property type="protein sequence ID" value="CAB59430.1"/>
    <property type="molecule type" value="mRNA"/>
</dbReference>
<dbReference type="EMBL" id="AJ748263">
    <property type="protein sequence ID" value="CAH04307.1"/>
    <property type="molecule type" value="Genomic_DNA"/>
</dbReference>
<dbReference type="EMBL" id="FR852382">
    <property type="protein sequence ID" value="CCA65515.1"/>
    <property type="molecule type" value="Genomic_DNA"/>
</dbReference>
<dbReference type="RefSeq" id="NP_001313145.1">
    <property type="nucleotide sequence ID" value="NM_001326216.1"/>
</dbReference>
<dbReference type="SMR" id="A0A1S4DFD3"/>
<dbReference type="STRING" id="4097.A0A1S4DFD3"/>
<dbReference type="PaxDb" id="4097-A0A1S4DFD3"/>
<dbReference type="GeneID" id="107829122"/>
<dbReference type="KEGG" id="nta:107829122"/>
<dbReference type="OMA" id="MAIMVFE"/>
<dbReference type="OrthoDB" id="10067394at2759"/>
<dbReference type="BioCyc" id="MetaCyc:MONOMER-12622"/>
<dbReference type="BRENDA" id="2.4.2.19">
    <property type="organism ID" value="3645"/>
</dbReference>
<dbReference type="UniPathway" id="UPA00107"/>
<dbReference type="UniPathway" id="UPA00253">
    <property type="reaction ID" value="UER00331"/>
</dbReference>
<dbReference type="Proteomes" id="UP000084051">
    <property type="component" value="Unplaced"/>
</dbReference>
<dbReference type="GO" id="GO:0005737">
    <property type="term" value="C:cytoplasm"/>
    <property type="evidence" value="ECO:0000318"/>
    <property type="project" value="GO_Central"/>
</dbReference>
<dbReference type="GO" id="GO:0005739">
    <property type="term" value="C:mitochondrion"/>
    <property type="evidence" value="ECO:0007669"/>
    <property type="project" value="UniProtKB-SubCell"/>
</dbReference>
<dbReference type="GO" id="GO:0004514">
    <property type="term" value="F:nicotinate-nucleotide diphosphorylase (carboxylating) activity"/>
    <property type="evidence" value="ECO:0000318"/>
    <property type="project" value="GO_Central"/>
</dbReference>
<dbReference type="GO" id="GO:0009820">
    <property type="term" value="P:alkaloid metabolic process"/>
    <property type="evidence" value="ECO:0007669"/>
    <property type="project" value="UniProtKB-KW"/>
</dbReference>
<dbReference type="GO" id="GO:0009435">
    <property type="term" value="P:NAD biosynthetic process"/>
    <property type="evidence" value="ECO:0000318"/>
    <property type="project" value="GO_Central"/>
</dbReference>
<dbReference type="GO" id="GO:0042179">
    <property type="term" value="P:nicotine biosynthetic process"/>
    <property type="evidence" value="ECO:0007669"/>
    <property type="project" value="UniProtKB-UniPathway"/>
</dbReference>
<dbReference type="GO" id="GO:0034213">
    <property type="term" value="P:quinolinate catabolic process"/>
    <property type="evidence" value="ECO:0000318"/>
    <property type="project" value="GO_Central"/>
</dbReference>
<dbReference type="GO" id="GO:0009753">
    <property type="term" value="P:response to jasmonic acid"/>
    <property type="evidence" value="ECO:0000270"/>
    <property type="project" value="UniProtKB"/>
</dbReference>
<dbReference type="GO" id="GO:0009611">
    <property type="term" value="P:response to wounding"/>
    <property type="evidence" value="ECO:0000270"/>
    <property type="project" value="UniProtKB"/>
</dbReference>
<dbReference type="CDD" id="cd01572">
    <property type="entry name" value="QPRTase"/>
    <property type="match status" value="1"/>
</dbReference>
<dbReference type="FunFam" id="3.90.1170.20:FF:000001">
    <property type="entry name" value="Nicotinate-nucleotide diphosphorylase (Carboxylating)"/>
    <property type="match status" value="1"/>
</dbReference>
<dbReference type="FunFam" id="3.20.20.70:FF:000149">
    <property type="entry name" value="Nicotinate-nucleotide pyrophosphorylase [carboxylating]"/>
    <property type="match status" value="1"/>
</dbReference>
<dbReference type="Gene3D" id="3.20.20.70">
    <property type="entry name" value="Aldolase class I"/>
    <property type="match status" value="1"/>
</dbReference>
<dbReference type="Gene3D" id="3.90.1170.20">
    <property type="entry name" value="Quinolinate phosphoribosyl transferase, N-terminal domain"/>
    <property type="match status" value="1"/>
</dbReference>
<dbReference type="InterPro" id="IPR013785">
    <property type="entry name" value="Aldolase_TIM"/>
</dbReference>
<dbReference type="InterPro" id="IPR004393">
    <property type="entry name" value="NadC"/>
</dbReference>
<dbReference type="InterPro" id="IPR027277">
    <property type="entry name" value="NadC/ModD"/>
</dbReference>
<dbReference type="InterPro" id="IPR036068">
    <property type="entry name" value="Nicotinate_pribotase-like_C"/>
</dbReference>
<dbReference type="InterPro" id="IPR037128">
    <property type="entry name" value="Quinolinate_PRibosylTase_N_sf"/>
</dbReference>
<dbReference type="InterPro" id="IPR002638">
    <property type="entry name" value="Quinolinate_PRibosylTrfase_C"/>
</dbReference>
<dbReference type="InterPro" id="IPR022412">
    <property type="entry name" value="Quinolinate_PRibosylTrfase_N"/>
</dbReference>
<dbReference type="NCBIfam" id="TIGR00078">
    <property type="entry name" value="nadC"/>
    <property type="match status" value="1"/>
</dbReference>
<dbReference type="PANTHER" id="PTHR32179">
    <property type="entry name" value="NICOTINATE-NUCLEOTIDE PYROPHOSPHORYLASE [CARBOXYLATING]"/>
    <property type="match status" value="1"/>
</dbReference>
<dbReference type="PANTHER" id="PTHR32179:SF3">
    <property type="entry name" value="NICOTINATE-NUCLEOTIDE PYROPHOSPHORYLASE [CARBOXYLATING]"/>
    <property type="match status" value="1"/>
</dbReference>
<dbReference type="Pfam" id="PF01729">
    <property type="entry name" value="QRPTase_C"/>
    <property type="match status" value="1"/>
</dbReference>
<dbReference type="Pfam" id="PF02749">
    <property type="entry name" value="QRPTase_N"/>
    <property type="match status" value="1"/>
</dbReference>
<dbReference type="SUPFAM" id="SSF51690">
    <property type="entry name" value="Nicotinate/Quinolinate PRTase C-terminal domain-like"/>
    <property type="match status" value="1"/>
</dbReference>
<dbReference type="SUPFAM" id="SSF54675">
    <property type="entry name" value="Nicotinate/Quinolinate PRTase N-terminal domain-like"/>
    <property type="match status" value="1"/>
</dbReference>
<comment type="function">
    <text evidence="5 9 10 11">Involved in the biosynthesis of pyridine alkaloid natural products, leading mainly to the production of anabasine, anatabine, nicotine and nornicotine, effective deterrents against herbivores with antiparasitic and pesticide properties (neurotoxins); nornicotine serves as the precursor in the synthesis of the carcinogen compound N'-nitrosonornicotine (NNN) (Probable) (PubMed:31276744). Involved in the catabolism of quinolinic acid (QA) (Probable).</text>
</comment>
<comment type="catalytic activity">
    <reaction evidence="9 10 11">
        <text>nicotinate beta-D-ribonucleotide + CO2 + diphosphate = quinolinate + 5-phospho-alpha-D-ribose 1-diphosphate + 2 H(+)</text>
        <dbReference type="Rhea" id="RHEA:12733"/>
        <dbReference type="ChEBI" id="CHEBI:15378"/>
        <dbReference type="ChEBI" id="CHEBI:16526"/>
        <dbReference type="ChEBI" id="CHEBI:29959"/>
        <dbReference type="ChEBI" id="CHEBI:33019"/>
        <dbReference type="ChEBI" id="CHEBI:57502"/>
        <dbReference type="ChEBI" id="CHEBI:58017"/>
        <dbReference type="EC" id="2.4.2.19"/>
    </reaction>
    <physiologicalReaction direction="right-to-left" evidence="9 10 11">
        <dbReference type="Rhea" id="RHEA:12735"/>
    </physiologicalReaction>
</comment>
<comment type="pathway">
    <text evidence="9 10 11">Alkaloid biosynthesis; nicotine biosynthesis.</text>
</comment>
<comment type="pathway">
    <text evidence="9 10 11">Cofactor biosynthesis; NAD(+) biosynthesis; nicotinate D-ribonucleotide from quinolinate: step 1/1.</text>
</comment>
<comment type="subcellular location">
    <subcellularLocation>
        <location evidence="2">Mitochondrion</location>
    </subcellularLocation>
</comment>
<comment type="tissue specificity">
    <text evidence="3 4">Expressed in roots and flowers.</text>
</comment>
<comment type="developmental stage">
    <text evidence="3">In flowers, expressed in anthers, upper region of style, stigma and pollen from dehisced anthers.</text>
</comment>
<comment type="induction">
    <text evidence="3">Triggered by wounding and jasmonic acid (MeJA).</text>
</comment>
<comment type="similarity">
    <text evidence="8">Belongs to the NadC/ModD family.</text>
</comment>
<reference key="1">
    <citation type="journal article" date="2000" name="Plant Mol. Biol.">
        <title>Molecular characterization of quinolinate phosphoribosyltransferase (QPRtase) in Nicotiana.</title>
        <authorList>
            <person name="Sinclair S.J."/>
            <person name="Murphy K.J."/>
            <person name="Birch C.D."/>
            <person name="Hamill J.D."/>
        </authorList>
    </citation>
    <scope>NUCLEOTIDE SEQUENCE [MRNA]</scope>
    <source>
        <strain>cv. NC95</strain>
        <strain>cv. SC58</strain>
        <tissue>Root</tissue>
    </source>
</reference>
<reference key="2">
    <citation type="journal article" date="2012" name="Plant Sci.">
        <title>Structure and expression of the quinolinate phosphoribosyltransferase (QPT) gene family in Nicotiana.</title>
        <authorList>
            <person name="Ryan S.M."/>
            <person name="Cane K.A."/>
            <person name="DeBoer K.D."/>
            <person name="Sinclair S.J."/>
            <person name="Brimblecombe R."/>
            <person name="Hamill J.D."/>
        </authorList>
    </citation>
    <scope>NUCLEOTIDE SEQUENCE [GENOMIC DNA]</scope>
    <scope>FUNCTION</scope>
    <scope>CATALYTIC ACTIVITY</scope>
    <scope>PATHWAY</scope>
    <scope>INDUCTION BY WOUNDING AND JASMONATE</scope>
    <scope>TISSUE SPECIFICITY</scope>
    <scope>DEVELOPMENTAL STAGE</scope>
    <scope>GENE FAMILY</scope>
    <source>
        <strain>cv. Xanthi</strain>
        <tissue>Leaf</tissue>
    </source>
</reference>
<reference key="3">
    <citation type="journal article" date="2014" name="Nat. Commun.">
        <title>The tobacco genome sequence and its comparison with those of tomato and potato.</title>
        <authorList>
            <person name="Sierro N."/>
            <person name="Battey J.N."/>
            <person name="Ouadi S."/>
            <person name="Bakaher N."/>
            <person name="Bovet L."/>
            <person name="Willig A."/>
            <person name="Goepfert S."/>
            <person name="Peitsch M.C."/>
            <person name="Ivanov N.V."/>
        </authorList>
    </citation>
    <scope>NUCLEOTIDE SEQUENCE [LARGE SCALE GENOMIC DNA]</scope>
    <source>
        <strain>cv. TN90</strain>
    </source>
</reference>
<reference key="4">
    <citation type="journal article" date="2013" name="Phytochemistry">
        <title>Molecular genetics of alkaloid biosynthesis in Nicotiana tabacum.</title>
        <authorList>
            <person name="Dewey R.E."/>
            <person name="Xie J."/>
        </authorList>
    </citation>
    <scope>CATALYTIC ACTIVITY</scope>
    <scope>PATHWAY</scope>
    <scope>TISSUE SPECIFICITY</scope>
    <scope>REVIEW ON ALKALOID BIOSYNTHESIS IN NICOTIANA TABACUM</scope>
</reference>
<reference key="5">
    <citation type="journal article" date="2015" name="Mol. Genet. Genomics">
        <title>Current status and prospects for the study of Nicotiana genomics, genetics, and nicotine biosynthesis genes.</title>
        <authorList>
            <person name="Wang X."/>
            <person name="Bennetzen J.L."/>
        </authorList>
    </citation>
    <scope>CATALYTIC ACTIVITY</scope>
    <scope>PATHWAY</scope>
    <scope>REVIEW ON NICOTINE BIOSYNTHESIS</scope>
</reference>
<reference key="6">
    <citation type="journal article" date="2019" name="Food Chem. Toxicol.">
        <title>Antiparasitic properties of leaf extracts derived from selected Nicotiana species and Nicotiana tabacum varieties.</title>
        <authorList>
            <person name="Schorderet Weber S."/>
            <person name="Kaminski K.P."/>
            <person name="Perret J.-L."/>
            <person name="Leroy P."/>
            <person name="Mazurov A."/>
            <person name="Peitsch M.C."/>
            <person name="Ivanov N.V."/>
            <person name="Hoeng J."/>
        </authorList>
    </citation>
    <scope>FUNCTION</scope>
    <source>
        <strain>cv. Burley Stella</strain>
        <strain>cv. Burley TN90</strain>
        <strain>cv. Virginia ITB 683</strain>
        <strain>cv. Virginia K326</strain>
    </source>
</reference>
<feature type="transit peptide" description="Mitochondrion" evidence="2">
    <location>
        <begin position="1"/>
        <end status="unknown"/>
    </location>
</feature>
<feature type="chain" id="PRO_0000455790" description="Quinolinate phosphoribosyltransferase [decarboxylating] 2a, mitochondrial">
    <location>
        <begin status="unknown"/>
        <end position="351"/>
    </location>
</feature>
<feature type="binding site" evidence="1">
    <location>
        <position position="142"/>
    </location>
    <ligand>
        <name>substrate</name>
    </ligand>
</feature>
<feature type="binding site" evidence="1">
    <location>
        <begin position="173"/>
        <end position="175"/>
    </location>
    <ligand>
        <name>substrate</name>
    </ligand>
</feature>
<feature type="binding site" evidence="1">
    <location>
        <position position="197"/>
    </location>
    <ligand>
        <name>substrate</name>
    </ligand>
</feature>
<feature type="binding site" evidence="1">
    <location>
        <position position="207"/>
    </location>
    <ligand>
        <name>substrate</name>
    </ligand>
</feature>
<feature type="binding site" evidence="1">
    <location>
        <position position="240"/>
    </location>
    <ligand>
        <name>substrate</name>
    </ligand>
</feature>
<feature type="binding site" evidence="1">
    <location>
        <position position="267"/>
    </location>
    <ligand>
        <name>substrate</name>
    </ligand>
</feature>
<feature type="binding site" evidence="1">
    <location>
        <begin position="299"/>
        <end position="301"/>
    </location>
    <ligand>
        <name>substrate</name>
    </ligand>
</feature>
<feature type="binding site" evidence="1">
    <location>
        <begin position="320"/>
        <end position="322"/>
    </location>
    <ligand>
        <name>substrate</name>
    </ligand>
</feature>
<feature type="sequence conflict" description="In Ref. 2; CAH04307." evidence="8" ref="2">
    <original>L</original>
    <variation>I</variation>
    <location>
        <position position="5"/>
    </location>
</feature>
<feature type="sequence conflict" description="In Ref. 2; CAH04307." evidence="8" ref="2">
    <original>V</original>
    <variation>L</variation>
    <location>
        <position position="76"/>
    </location>
</feature>
<feature type="sequence conflict" description="In Ref. 2; CAH04307." evidence="8" ref="2">
    <original>E</original>
    <variation>D</variation>
    <location>
        <position position="252"/>
    </location>
</feature>
<feature type="sequence conflict" description="In Ref. 1; CAB59430." evidence="8" ref="1">
    <original>H</original>
    <variation>Q</variation>
    <location>
        <position position="325"/>
    </location>
</feature>
<feature type="sequence conflict" description="In Ref. 1; CAB59430." evidence="8" ref="1">
    <original>R</original>
    <variation>Q</variation>
    <location>
        <position position="350"/>
    </location>
</feature>
<evidence type="ECO:0000250" key="1">
    <source>
        <dbReference type="UniProtKB" id="P9WJJ7"/>
    </source>
</evidence>
<evidence type="ECO:0000255" key="2"/>
<evidence type="ECO:0000269" key="3">
    <source>
    </source>
</evidence>
<evidence type="ECO:0000269" key="4">
    <source>
    </source>
</evidence>
<evidence type="ECO:0000269" key="5">
    <source>
    </source>
</evidence>
<evidence type="ECO:0000303" key="6">
    <source>
    </source>
</evidence>
<evidence type="ECO:0000303" key="7">
    <source>
    </source>
</evidence>
<evidence type="ECO:0000305" key="8"/>
<evidence type="ECO:0000305" key="9">
    <source>
    </source>
</evidence>
<evidence type="ECO:0000305" key="10">
    <source>
    </source>
</evidence>
<evidence type="ECO:0000305" key="11">
    <source>
    </source>
</evidence>
<proteinExistence type="evidence at protein level"/>
<accession>A0A1S4DFD3</accession>
<accession>I0J224</accession>
<accession>Q0WX54</accession>
<accession>Q9SMB7</accession>
<keyword id="KW-0017">Alkaloid metabolism</keyword>
<keyword id="KW-0328">Glycosyltransferase</keyword>
<keyword id="KW-0496">Mitochondrion</keyword>
<keyword id="KW-0662">Pyridine nucleotide biosynthesis</keyword>
<keyword id="KW-1185">Reference proteome</keyword>
<keyword id="KW-0808">Transferase</keyword>
<keyword id="KW-0809">Transit peptide</keyword>
<sequence>MFRALPFTATVHPYAITAPRLVVKMSAIATKNTRVESLEVKPPAHPTYDLKGVMQLALSEDAGNLGDVTCKATIPVDMESDAHFLAKEDGIIAGIALAEMIFAEVDPSLKVEWYVNDGDKVHKGLKFGKVQGNAYNIVIAERVVLNFMQRMSGIATLTKEMADAAHPAYILETRKTAPGLRLVDKWAVLIGGGKNHRMGLFDMVMIKDNHISAAGGVGKALKSVDQYLEQNKLQIGVEVETRTIAEVREVLEYASQTKTSLTRIMLDNMVVPLSNGDIDVSMLKEAVELINGRFDTEASGNVTLETVHKIGQTGVTYISSGALTHSVKALDISLKIDTELALEVGRRTKRA</sequence>
<organism>
    <name type="scientific">Nicotiana tabacum</name>
    <name type="common">Common tobacco</name>
    <dbReference type="NCBI Taxonomy" id="4097"/>
    <lineage>
        <taxon>Eukaryota</taxon>
        <taxon>Viridiplantae</taxon>
        <taxon>Streptophyta</taxon>
        <taxon>Embryophyta</taxon>
        <taxon>Tracheophyta</taxon>
        <taxon>Spermatophyta</taxon>
        <taxon>Magnoliopsida</taxon>
        <taxon>eudicotyledons</taxon>
        <taxon>Gunneridae</taxon>
        <taxon>Pentapetalae</taxon>
        <taxon>asterids</taxon>
        <taxon>lamiids</taxon>
        <taxon>Solanales</taxon>
        <taxon>Solanaceae</taxon>
        <taxon>Nicotianoideae</taxon>
        <taxon>Nicotianeae</taxon>
        <taxon>Nicotiana</taxon>
    </lineage>
</organism>